<gene>
    <name evidence="1" type="primary">psd</name>
    <name type="ordered locus">Pmen_0621</name>
</gene>
<evidence type="ECO:0000255" key="1">
    <source>
        <dbReference type="HAMAP-Rule" id="MF_00662"/>
    </source>
</evidence>
<accession>A4XPX3</accession>
<dbReference type="EC" id="4.1.1.65" evidence="1"/>
<dbReference type="EMBL" id="CP000680">
    <property type="protein sequence ID" value="ABP83389.1"/>
    <property type="molecule type" value="Genomic_DNA"/>
</dbReference>
<dbReference type="SMR" id="A4XPX3"/>
<dbReference type="STRING" id="399739.Pmen_0621"/>
<dbReference type="KEGG" id="pmy:Pmen_0621"/>
<dbReference type="PATRIC" id="fig|399739.8.peg.628"/>
<dbReference type="eggNOG" id="COG0688">
    <property type="taxonomic scope" value="Bacteria"/>
</dbReference>
<dbReference type="HOGENOM" id="CLU_029061_4_1_6"/>
<dbReference type="OrthoDB" id="9802030at2"/>
<dbReference type="UniPathway" id="UPA00558">
    <property type="reaction ID" value="UER00616"/>
</dbReference>
<dbReference type="GO" id="GO:0005886">
    <property type="term" value="C:plasma membrane"/>
    <property type="evidence" value="ECO:0007669"/>
    <property type="project" value="UniProtKB-SubCell"/>
</dbReference>
<dbReference type="GO" id="GO:0004609">
    <property type="term" value="F:phosphatidylserine decarboxylase activity"/>
    <property type="evidence" value="ECO:0007669"/>
    <property type="project" value="UniProtKB-UniRule"/>
</dbReference>
<dbReference type="GO" id="GO:0006646">
    <property type="term" value="P:phosphatidylethanolamine biosynthetic process"/>
    <property type="evidence" value="ECO:0007669"/>
    <property type="project" value="UniProtKB-UniRule"/>
</dbReference>
<dbReference type="HAMAP" id="MF_00662">
    <property type="entry name" value="PS_decarb_PSD_B_type1"/>
    <property type="match status" value="1"/>
</dbReference>
<dbReference type="InterPro" id="IPR003817">
    <property type="entry name" value="PS_Dcarbxylase"/>
</dbReference>
<dbReference type="InterPro" id="IPR033177">
    <property type="entry name" value="PSD-B"/>
</dbReference>
<dbReference type="InterPro" id="IPR033178">
    <property type="entry name" value="PSD_type1_pro"/>
</dbReference>
<dbReference type="NCBIfam" id="TIGR00163">
    <property type="entry name" value="PS_decarb"/>
    <property type="match status" value="1"/>
</dbReference>
<dbReference type="PANTHER" id="PTHR10067">
    <property type="entry name" value="PHOSPHATIDYLSERINE DECARBOXYLASE"/>
    <property type="match status" value="1"/>
</dbReference>
<dbReference type="PANTHER" id="PTHR10067:SF6">
    <property type="entry name" value="PHOSPHATIDYLSERINE DECARBOXYLASE PROENZYME, MITOCHONDRIAL"/>
    <property type="match status" value="1"/>
</dbReference>
<dbReference type="Pfam" id="PF02666">
    <property type="entry name" value="PS_Dcarbxylase"/>
    <property type="match status" value="1"/>
</dbReference>
<proteinExistence type="inferred from homology"/>
<organism>
    <name type="scientific">Ectopseudomonas mendocina (strain ymp)</name>
    <name type="common">Pseudomonas mendocina</name>
    <dbReference type="NCBI Taxonomy" id="399739"/>
    <lineage>
        <taxon>Bacteria</taxon>
        <taxon>Pseudomonadati</taxon>
        <taxon>Pseudomonadota</taxon>
        <taxon>Gammaproteobacteria</taxon>
        <taxon>Pseudomonadales</taxon>
        <taxon>Pseudomonadaceae</taxon>
        <taxon>Ectopseudomonas</taxon>
    </lineage>
</organism>
<reference key="1">
    <citation type="submission" date="2007-04" db="EMBL/GenBank/DDBJ databases">
        <title>Complete sequence of Pseudomonas mendocina ymp.</title>
        <authorList>
            <consortium name="US DOE Joint Genome Institute"/>
            <person name="Copeland A."/>
            <person name="Lucas S."/>
            <person name="Lapidus A."/>
            <person name="Barry K."/>
            <person name="Glavina del Rio T."/>
            <person name="Dalin E."/>
            <person name="Tice H."/>
            <person name="Pitluck S."/>
            <person name="Kiss H."/>
            <person name="Brettin T."/>
            <person name="Detter J.C."/>
            <person name="Bruce D."/>
            <person name="Han C."/>
            <person name="Schmutz J."/>
            <person name="Larimer F."/>
            <person name="Land M."/>
            <person name="Hauser L."/>
            <person name="Kyrpides N."/>
            <person name="Mikhailova N."/>
            <person name="Hersman L."/>
            <person name="Dubois J."/>
            <person name="Maurice P."/>
            <person name="Richardson P."/>
        </authorList>
    </citation>
    <scope>NUCLEOTIDE SEQUENCE [LARGE SCALE GENOMIC DNA]</scope>
    <source>
        <strain>ymp</strain>
    </source>
</reference>
<comment type="function">
    <text evidence="1">Catalyzes the formation of phosphatidylethanolamine (PtdEtn) from phosphatidylserine (PtdSer).</text>
</comment>
<comment type="catalytic activity">
    <reaction evidence="1">
        <text>a 1,2-diacyl-sn-glycero-3-phospho-L-serine + H(+) = a 1,2-diacyl-sn-glycero-3-phosphoethanolamine + CO2</text>
        <dbReference type="Rhea" id="RHEA:20828"/>
        <dbReference type="ChEBI" id="CHEBI:15378"/>
        <dbReference type="ChEBI" id="CHEBI:16526"/>
        <dbReference type="ChEBI" id="CHEBI:57262"/>
        <dbReference type="ChEBI" id="CHEBI:64612"/>
        <dbReference type="EC" id="4.1.1.65"/>
    </reaction>
</comment>
<comment type="cofactor">
    <cofactor evidence="1">
        <name>pyruvate</name>
        <dbReference type="ChEBI" id="CHEBI:15361"/>
    </cofactor>
    <text evidence="1">Binds 1 pyruvoyl group covalently per subunit.</text>
</comment>
<comment type="pathway">
    <text evidence="1">Phospholipid metabolism; phosphatidylethanolamine biosynthesis; phosphatidylethanolamine from CDP-diacylglycerol: step 2/2.</text>
</comment>
<comment type="subunit">
    <text evidence="1">Heterodimer of a large membrane-associated beta subunit and a small pyruvoyl-containing alpha subunit.</text>
</comment>
<comment type="subcellular location">
    <subcellularLocation>
        <location evidence="1">Cell membrane</location>
        <topology evidence="1">Peripheral membrane protein</topology>
    </subcellularLocation>
</comment>
<comment type="PTM">
    <text evidence="1">Is synthesized initially as an inactive proenzyme. Formation of the active enzyme involves a self-maturation process in which the active site pyruvoyl group is generated from an internal serine residue via an autocatalytic post-translational modification. Two non-identical subunits are generated from the proenzyme in this reaction, and the pyruvate is formed at the N-terminus of the alpha chain, which is derived from the carboxyl end of the proenzyme. The autoendoproteolytic cleavage occurs by a canonical serine protease mechanism, in which the side chain hydroxyl group of the serine supplies its oxygen atom to form the C-terminus of the beta chain, while the remainder of the serine residue undergoes an oxidative deamination to produce ammonia and the pyruvoyl prosthetic group on the alpha chain. During this reaction, the Ser that is part of the protease active site of the proenzyme becomes the pyruvoyl prosthetic group, which constitutes an essential element of the active site of the mature decarboxylase.</text>
</comment>
<comment type="similarity">
    <text evidence="1">Belongs to the phosphatidylserine decarboxylase family. PSD-B subfamily. Prokaryotic type I sub-subfamily.</text>
</comment>
<feature type="chain" id="PRO_1000026570" description="Phosphatidylserine decarboxylase beta chain" evidence="1">
    <location>
        <begin position="1"/>
        <end position="251"/>
    </location>
</feature>
<feature type="chain" id="PRO_1000026571" description="Phosphatidylserine decarboxylase alpha chain" evidence="1">
    <location>
        <begin position="252"/>
        <end position="286"/>
    </location>
</feature>
<feature type="active site" description="Charge relay system; for autoendoproteolytic cleavage activity" evidence="1">
    <location>
        <position position="90"/>
    </location>
</feature>
<feature type="active site" description="Charge relay system; for autoendoproteolytic cleavage activity" evidence="1">
    <location>
        <position position="147"/>
    </location>
</feature>
<feature type="active site" description="Charge relay system; for autoendoproteolytic cleavage activity" evidence="1">
    <location>
        <position position="252"/>
    </location>
</feature>
<feature type="active site" description="Schiff-base intermediate with substrate; via pyruvic acid; for decarboxylase activity" evidence="1">
    <location>
        <position position="252"/>
    </location>
</feature>
<feature type="site" description="Cleavage (non-hydrolytic); by autocatalysis" evidence="1">
    <location>
        <begin position="251"/>
        <end position="252"/>
    </location>
</feature>
<feature type="modified residue" description="Pyruvic acid (Ser); by autocatalysis" evidence="1">
    <location>
        <position position="252"/>
    </location>
</feature>
<sequence>MKQRLFILSQYLLPHHLLSRLIGCVAECRIGWLKNRLIAWFAKQYRVDMSEAQVEDLSAYEHFNAFFTRALKAGARPLDETPGAILCPADGAISQLGVIEHGRLFQAKGHSFSATELLGGDAERAAPFMGGQFATVYLSPKDYHRVHMPLAGTLKEMVYVPGRLFSVNQTTAENVPELFARNERVVCLFDTERGPMAVVLVGAMIVASVETVWAGLVTPPKRELKSTRYDAESRGPIELAKGAELGRFKLGSTAIVLFGPQQVQWAEELTAGSTVRMGQLLGNAQL</sequence>
<name>PSD_ECTM1</name>
<keyword id="KW-1003">Cell membrane</keyword>
<keyword id="KW-0210">Decarboxylase</keyword>
<keyword id="KW-0444">Lipid biosynthesis</keyword>
<keyword id="KW-0443">Lipid metabolism</keyword>
<keyword id="KW-0456">Lyase</keyword>
<keyword id="KW-0472">Membrane</keyword>
<keyword id="KW-0594">Phospholipid biosynthesis</keyword>
<keyword id="KW-1208">Phospholipid metabolism</keyword>
<keyword id="KW-0670">Pyruvate</keyword>
<keyword id="KW-0865">Zymogen</keyword>
<protein>
    <recommendedName>
        <fullName evidence="1">Phosphatidylserine decarboxylase proenzyme</fullName>
        <ecNumber evidence="1">4.1.1.65</ecNumber>
    </recommendedName>
    <component>
        <recommendedName>
            <fullName evidence="1">Phosphatidylserine decarboxylase alpha chain</fullName>
        </recommendedName>
    </component>
    <component>
        <recommendedName>
            <fullName evidence="1">Phosphatidylserine decarboxylase beta chain</fullName>
        </recommendedName>
    </component>
</protein>